<dbReference type="EMBL" id="U00096">
    <property type="protein sequence ID" value="AAC74729.1"/>
    <property type="molecule type" value="Genomic_DNA"/>
</dbReference>
<dbReference type="EMBL" id="AP009048">
    <property type="protein sequence ID" value="BAA15423.1"/>
    <property type="molecule type" value="Genomic_DNA"/>
</dbReference>
<dbReference type="PIR" id="C64923">
    <property type="entry name" value="C64923"/>
</dbReference>
<dbReference type="RefSeq" id="NP_416174.1">
    <property type="nucleotide sequence ID" value="NC_000913.3"/>
</dbReference>
<dbReference type="RefSeq" id="WP_000701040.1">
    <property type="nucleotide sequence ID" value="NZ_STEB01000003.1"/>
</dbReference>
<dbReference type="SMR" id="P77389"/>
<dbReference type="BioGRID" id="4260270">
    <property type="interactions" value="170"/>
</dbReference>
<dbReference type="FunCoup" id="P77389">
    <property type="interactions" value="290"/>
</dbReference>
<dbReference type="STRING" id="511145.b1657"/>
<dbReference type="TCDB" id="2.A.1.2.65">
    <property type="family name" value="the major facilitator superfamily (mfs)"/>
</dbReference>
<dbReference type="PaxDb" id="511145-b1657"/>
<dbReference type="EnsemblBacteria" id="AAC74729">
    <property type="protein sequence ID" value="AAC74729"/>
    <property type="gene ID" value="b1657"/>
</dbReference>
<dbReference type="GeneID" id="947340"/>
<dbReference type="KEGG" id="ecj:JW1649"/>
<dbReference type="KEGG" id="eco:b1657"/>
<dbReference type="KEGG" id="ecoc:C3026_09505"/>
<dbReference type="PATRIC" id="fig|1411691.4.peg.601"/>
<dbReference type="EchoBASE" id="EB3708"/>
<dbReference type="eggNOG" id="COG2814">
    <property type="taxonomic scope" value="Bacteria"/>
</dbReference>
<dbReference type="HOGENOM" id="CLU_001265_61_2_6"/>
<dbReference type="InParanoid" id="P77389"/>
<dbReference type="OMA" id="IAPMMTH"/>
<dbReference type="OrthoDB" id="9788453at2"/>
<dbReference type="PhylomeDB" id="P77389"/>
<dbReference type="BioCyc" id="EcoCyc:B1657-MONOMER"/>
<dbReference type="PRO" id="PR:P77389"/>
<dbReference type="Proteomes" id="UP000000625">
    <property type="component" value="Chromosome"/>
</dbReference>
<dbReference type="GO" id="GO:0005886">
    <property type="term" value="C:plasma membrane"/>
    <property type="evidence" value="ECO:0000314"/>
    <property type="project" value="EcoCyc"/>
</dbReference>
<dbReference type="GO" id="GO:0022857">
    <property type="term" value="F:transmembrane transporter activity"/>
    <property type="evidence" value="ECO:0000318"/>
    <property type="project" value="GO_Central"/>
</dbReference>
<dbReference type="GO" id="GO:0055085">
    <property type="term" value="P:transmembrane transport"/>
    <property type="evidence" value="ECO:0000318"/>
    <property type="project" value="GO_Central"/>
</dbReference>
<dbReference type="CDD" id="cd17324">
    <property type="entry name" value="MFS_NepI_like"/>
    <property type="match status" value="1"/>
</dbReference>
<dbReference type="FunFam" id="1.20.1250.20:FF:000104">
    <property type="entry name" value="Inner membrane transporter ydhP"/>
    <property type="match status" value="1"/>
</dbReference>
<dbReference type="Gene3D" id="1.20.1250.20">
    <property type="entry name" value="MFS general substrate transporter like domains"/>
    <property type="match status" value="1"/>
</dbReference>
<dbReference type="InterPro" id="IPR011701">
    <property type="entry name" value="MFS"/>
</dbReference>
<dbReference type="InterPro" id="IPR020846">
    <property type="entry name" value="MFS_dom"/>
</dbReference>
<dbReference type="InterPro" id="IPR050189">
    <property type="entry name" value="MFS_Efflux_Transporters"/>
</dbReference>
<dbReference type="InterPro" id="IPR036259">
    <property type="entry name" value="MFS_trans_sf"/>
</dbReference>
<dbReference type="PANTHER" id="PTHR43124:SF8">
    <property type="entry name" value="INNER MEMBRANE TRANSPORT PROTEIN YDHP"/>
    <property type="match status" value="1"/>
</dbReference>
<dbReference type="PANTHER" id="PTHR43124">
    <property type="entry name" value="PURINE EFFLUX PUMP PBUE"/>
    <property type="match status" value="1"/>
</dbReference>
<dbReference type="Pfam" id="PF07690">
    <property type="entry name" value="MFS_1"/>
    <property type="match status" value="1"/>
</dbReference>
<dbReference type="SUPFAM" id="SSF103473">
    <property type="entry name" value="MFS general substrate transporter"/>
    <property type="match status" value="1"/>
</dbReference>
<dbReference type="PROSITE" id="PS50850">
    <property type="entry name" value="MFS"/>
    <property type="match status" value="1"/>
</dbReference>
<protein>
    <recommendedName>
        <fullName>Inner membrane transport protein YdhP</fullName>
    </recommendedName>
</protein>
<evidence type="ECO:0000255" key="1"/>
<evidence type="ECO:0000305" key="2"/>
<sequence length="389" mass="40064">MKINYPLLALAIGAFGIGTTEFSPMGLLPVIARGVDVSIPAAGMLISAYAVGVMVGAPLMTLLLSHRARRSALIFLMAIFTLGNVLSAIAPDYMTLMLSRILTSLNHGAFFGLGSVVAASVVPKHKQASAVATMFMGLTLANIGGVPAATWLGETIGWRMSFLATAGLGVISMVSLFFSLPKGGAGARPEVKKELAVLMRPQVLSALLTTVLGAGAMFTLYTYISPVLQSITHATPVFVTAMLVLIGVGFSIGNYLGGKLADRSVNGTLKGFLLLLMVIMLAIPFLARNEFGAAISMVVWGAATFAVVPPLQMRVMRVASEAPGLSSSVNIGAFNLGNALGAAAGGAVISAGLGYSFVPVMGAIVAGLALLLVFMSARKQPETVCVANS</sequence>
<organism>
    <name type="scientific">Escherichia coli (strain K12)</name>
    <dbReference type="NCBI Taxonomy" id="83333"/>
    <lineage>
        <taxon>Bacteria</taxon>
        <taxon>Pseudomonadati</taxon>
        <taxon>Pseudomonadota</taxon>
        <taxon>Gammaproteobacteria</taxon>
        <taxon>Enterobacterales</taxon>
        <taxon>Enterobacteriaceae</taxon>
        <taxon>Escherichia</taxon>
    </lineage>
</organism>
<feature type="chain" id="PRO_0000173402" description="Inner membrane transport protein YdhP">
    <location>
        <begin position="1"/>
        <end position="389"/>
    </location>
</feature>
<feature type="topological domain" description="Cytoplasmic" evidence="1">
    <location>
        <begin position="1"/>
        <end position="6"/>
    </location>
</feature>
<feature type="transmembrane region" description="Helical" evidence="1">
    <location>
        <begin position="7"/>
        <end position="27"/>
    </location>
</feature>
<feature type="topological domain" description="Periplasmic" evidence="1">
    <location>
        <begin position="28"/>
        <end position="43"/>
    </location>
</feature>
<feature type="transmembrane region" description="Helical" evidence="1">
    <location>
        <begin position="44"/>
        <end position="64"/>
    </location>
</feature>
<feature type="topological domain" description="Cytoplasmic" evidence="1">
    <location>
        <begin position="65"/>
        <end position="70"/>
    </location>
</feature>
<feature type="transmembrane region" description="Helical" evidence="1">
    <location>
        <begin position="71"/>
        <end position="91"/>
    </location>
</feature>
<feature type="topological domain" description="Periplasmic" evidence="1">
    <location>
        <begin position="92"/>
        <end position="100"/>
    </location>
</feature>
<feature type="transmembrane region" description="Helical" evidence="1">
    <location>
        <begin position="101"/>
        <end position="121"/>
    </location>
</feature>
<feature type="topological domain" description="Cytoplasmic" evidence="1">
    <location>
        <begin position="122"/>
        <end position="130"/>
    </location>
</feature>
<feature type="transmembrane region" description="Helical" evidence="1">
    <location>
        <begin position="131"/>
        <end position="151"/>
    </location>
</feature>
<feature type="topological domain" description="Periplasmic" evidence="1">
    <location>
        <begin position="152"/>
        <end position="159"/>
    </location>
</feature>
<feature type="transmembrane region" description="Helical" evidence="1">
    <location>
        <begin position="160"/>
        <end position="180"/>
    </location>
</feature>
<feature type="topological domain" description="Cytoplasmic" evidence="1">
    <location>
        <begin position="181"/>
        <end position="203"/>
    </location>
</feature>
<feature type="transmembrane region" description="Helical" evidence="1">
    <location>
        <begin position="204"/>
        <end position="224"/>
    </location>
</feature>
<feature type="topological domain" description="Periplasmic" evidence="1">
    <location>
        <begin position="225"/>
        <end position="236"/>
    </location>
</feature>
<feature type="transmembrane region" description="Helical" evidence="1">
    <location>
        <begin position="237"/>
        <end position="257"/>
    </location>
</feature>
<feature type="topological domain" description="Cytoplasmic" evidence="1">
    <location>
        <begin position="258"/>
        <end position="266"/>
    </location>
</feature>
<feature type="transmembrane region" description="Helical" evidence="1">
    <location>
        <begin position="267"/>
        <end position="287"/>
    </location>
</feature>
<feature type="topological domain" description="Periplasmic" evidence="1">
    <location>
        <begin position="288"/>
        <end position="290"/>
    </location>
</feature>
<feature type="transmembrane region" description="Helical" evidence="1">
    <location>
        <begin position="291"/>
        <end position="311"/>
    </location>
</feature>
<feature type="topological domain" description="Cytoplasmic" evidence="1">
    <location>
        <begin position="312"/>
        <end position="330"/>
    </location>
</feature>
<feature type="transmembrane region" description="Helical" evidence="1">
    <location>
        <begin position="331"/>
        <end position="351"/>
    </location>
</feature>
<feature type="topological domain" description="Periplasmic" evidence="1">
    <location>
        <begin position="352"/>
        <end position="356"/>
    </location>
</feature>
<feature type="transmembrane region" description="Helical" evidence="1">
    <location>
        <begin position="357"/>
        <end position="377"/>
    </location>
</feature>
<feature type="topological domain" description="Cytoplasmic" evidence="1">
    <location>
        <begin position="378"/>
        <end position="389"/>
    </location>
</feature>
<proteinExistence type="evidence at protein level"/>
<comment type="subcellular location">
    <subcellularLocation>
        <location>Cell inner membrane</location>
        <topology>Multi-pass membrane protein</topology>
    </subcellularLocation>
</comment>
<comment type="similarity">
    <text evidence="2">Belongs to the major facilitator superfamily.</text>
</comment>
<reference key="1">
    <citation type="journal article" date="1996" name="DNA Res.">
        <title>A 570-kb DNA sequence of the Escherichia coli K-12 genome corresponding to the 28.0-40.1 min region on the linkage map.</title>
        <authorList>
            <person name="Aiba H."/>
            <person name="Baba T."/>
            <person name="Fujita K."/>
            <person name="Hayashi K."/>
            <person name="Inada T."/>
            <person name="Isono K."/>
            <person name="Itoh T."/>
            <person name="Kasai H."/>
            <person name="Kashimoto K."/>
            <person name="Kimura S."/>
            <person name="Kitakawa M."/>
            <person name="Kitagawa M."/>
            <person name="Makino K."/>
            <person name="Miki T."/>
            <person name="Mizobuchi K."/>
            <person name="Mori H."/>
            <person name="Mori T."/>
            <person name="Motomura K."/>
            <person name="Nakade S."/>
            <person name="Nakamura Y."/>
            <person name="Nashimoto H."/>
            <person name="Nishio Y."/>
            <person name="Oshima T."/>
            <person name="Saito N."/>
            <person name="Sampei G."/>
            <person name="Seki Y."/>
            <person name="Sivasundaram S."/>
            <person name="Tagami H."/>
            <person name="Takeda J."/>
            <person name="Takemoto K."/>
            <person name="Takeuchi Y."/>
            <person name="Wada C."/>
            <person name="Yamamoto Y."/>
            <person name="Horiuchi T."/>
        </authorList>
    </citation>
    <scope>NUCLEOTIDE SEQUENCE [LARGE SCALE GENOMIC DNA]</scope>
    <source>
        <strain>K12 / W3110 / ATCC 27325 / DSM 5911</strain>
    </source>
</reference>
<reference key="2">
    <citation type="journal article" date="1997" name="Science">
        <title>The complete genome sequence of Escherichia coli K-12.</title>
        <authorList>
            <person name="Blattner F.R."/>
            <person name="Plunkett G. III"/>
            <person name="Bloch C.A."/>
            <person name="Perna N.T."/>
            <person name="Burland V."/>
            <person name="Riley M."/>
            <person name="Collado-Vides J."/>
            <person name="Glasner J.D."/>
            <person name="Rode C.K."/>
            <person name="Mayhew G.F."/>
            <person name="Gregor J."/>
            <person name="Davis N.W."/>
            <person name="Kirkpatrick H.A."/>
            <person name="Goeden M.A."/>
            <person name="Rose D.J."/>
            <person name="Mau B."/>
            <person name="Shao Y."/>
        </authorList>
    </citation>
    <scope>NUCLEOTIDE SEQUENCE [LARGE SCALE GENOMIC DNA]</scope>
    <source>
        <strain>K12 / MG1655 / ATCC 47076</strain>
    </source>
</reference>
<reference key="3">
    <citation type="journal article" date="2006" name="Mol. Syst. Biol.">
        <title>Highly accurate genome sequences of Escherichia coli K-12 strains MG1655 and W3110.</title>
        <authorList>
            <person name="Hayashi K."/>
            <person name="Morooka N."/>
            <person name="Yamamoto Y."/>
            <person name="Fujita K."/>
            <person name="Isono K."/>
            <person name="Choi S."/>
            <person name="Ohtsubo E."/>
            <person name="Baba T."/>
            <person name="Wanner B.L."/>
            <person name="Mori H."/>
            <person name="Horiuchi T."/>
        </authorList>
    </citation>
    <scope>NUCLEOTIDE SEQUENCE [LARGE SCALE GENOMIC DNA]</scope>
    <source>
        <strain>K12 / W3110 / ATCC 27325 / DSM 5911</strain>
    </source>
</reference>
<reference key="4">
    <citation type="journal article" date="2005" name="Science">
        <title>Global topology analysis of the Escherichia coli inner membrane proteome.</title>
        <authorList>
            <person name="Daley D.O."/>
            <person name="Rapp M."/>
            <person name="Granseth E."/>
            <person name="Melen K."/>
            <person name="Drew D."/>
            <person name="von Heijne G."/>
        </authorList>
    </citation>
    <scope>TOPOLOGY [LARGE SCALE ANALYSIS]</scope>
    <source>
        <strain>K12 / MG1655 / ATCC 47076</strain>
    </source>
</reference>
<accession>P77389</accession>
<name>YDHP_ECOLI</name>
<keyword id="KW-0997">Cell inner membrane</keyword>
<keyword id="KW-1003">Cell membrane</keyword>
<keyword id="KW-0472">Membrane</keyword>
<keyword id="KW-1185">Reference proteome</keyword>
<keyword id="KW-0812">Transmembrane</keyword>
<keyword id="KW-1133">Transmembrane helix</keyword>
<keyword id="KW-0813">Transport</keyword>
<gene>
    <name type="primary">ydhP</name>
    <name type="ordered locus">b1657</name>
    <name type="ordered locus">JW1649</name>
</gene>